<protein>
    <recommendedName>
        <fullName evidence="1">Phosphoglycerate kinase</fullName>
        <ecNumber evidence="1">2.7.2.3</ecNumber>
    </recommendedName>
</protein>
<accession>A5GW73</accession>
<gene>
    <name evidence="1" type="primary">pgk</name>
    <name type="ordered locus">SynRCC307_2229</name>
</gene>
<feature type="chain" id="PRO_1000058080" description="Phosphoglycerate kinase">
    <location>
        <begin position="1"/>
        <end position="402"/>
    </location>
</feature>
<feature type="binding site" evidence="1">
    <location>
        <begin position="24"/>
        <end position="26"/>
    </location>
    <ligand>
        <name>substrate</name>
    </ligand>
</feature>
<feature type="binding site" evidence="1">
    <location>
        <position position="40"/>
    </location>
    <ligand>
        <name>substrate</name>
    </ligand>
</feature>
<feature type="binding site" evidence="1">
    <location>
        <begin position="63"/>
        <end position="66"/>
    </location>
    <ligand>
        <name>substrate</name>
    </ligand>
</feature>
<feature type="binding site" evidence="1">
    <location>
        <position position="122"/>
    </location>
    <ligand>
        <name>substrate</name>
    </ligand>
</feature>
<feature type="binding site" evidence="1">
    <location>
        <position position="155"/>
    </location>
    <ligand>
        <name>substrate</name>
    </ligand>
</feature>
<feature type="binding site" evidence="1">
    <location>
        <position position="206"/>
    </location>
    <ligand>
        <name>ATP</name>
        <dbReference type="ChEBI" id="CHEBI:30616"/>
    </ligand>
</feature>
<feature type="binding site" evidence="1">
    <location>
        <position position="297"/>
    </location>
    <ligand>
        <name>ATP</name>
        <dbReference type="ChEBI" id="CHEBI:30616"/>
    </ligand>
</feature>
<feature type="binding site" evidence="1">
    <location>
        <position position="328"/>
    </location>
    <ligand>
        <name>ATP</name>
        <dbReference type="ChEBI" id="CHEBI:30616"/>
    </ligand>
</feature>
<feature type="binding site" evidence="1">
    <location>
        <begin position="357"/>
        <end position="360"/>
    </location>
    <ligand>
        <name>ATP</name>
        <dbReference type="ChEBI" id="CHEBI:30616"/>
    </ligand>
</feature>
<proteinExistence type="inferred from homology"/>
<reference key="1">
    <citation type="submission" date="2006-05" db="EMBL/GenBank/DDBJ databases">
        <authorList>
            <consortium name="Genoscope"/>
        </authorList>
    </citation>
    <scope>NUCLEOTIDE SEQUENCE [LARGE SCALE GENOMIC DNA]</scope>
    <source>
        <strain>RCC307</strain>
    </source>
</reference>
<keyword id="KW-0067">ATP-binding</keyword>
<keyword id="KW-0963">Cytoplasm</keyword>
<keyword id="KW-0324">Glycolysis</keyword>
<keyword id="KW-0418">Kinase</keyword>
<keyword id="KW-0547">Nucleotide-binding</keyword>
<keyword id="KW-1185">Reference proteome</keyword>
<keyword id="KW-0808">Transferase</keyword>
<name>PGK_SYNR3</name>
<comment type="catalytic activity">
    <reaction evidence="1">
        <text>(2R)-3-phosphoglycerate + ATP = (2R)-3-phospho-glyceroyl phosphate + ADP</text>
        <dbReference type="Rhea" id="RHEA:14801"/>
        <dbReference type="ChEBI" id="CHEBI:30616"/>
        <dbReference type="ChEBI" id="CHEBI:57604"/>
        <dbReference type="ChEBI" id="CHEBI:58272"/>
        <dbReference type="ChEBI" id="CHEBI:456216"/>
        <dbReference type="EC" id="2.7.2.3"/>
    </reaction>
</comment>
<comment type="pathway">
    <text evidence="1">Carbohydrate degradation; glycolysis; pyruvate from D-glyceraldehyde 3-phosphate: step 2/5.</text>
</comment>
<comment type="subunit">
    <text evidence="1">Monomer.</text>
</comment>
<comment type="subcellular location">
    <subcellularLocation>
        <location evidence="1">Cytoplasm</location>
    </subcellularLocation>
</comment>
<comment type="similarity">
    <text evidence="1">Belongs to the phosphoglycerate kinase family.</text>
</comment>
<evidence type="ECO:0000255" key="1">
    <source>
        <dbReference type="HAMAP-Rule" id="MF_00145"/>
    </source>
</evidence>
<organism>
    <name type="scientific">Synechococcus sp. (strain RCC307)</name>
    <dbReference type="NCBI Taxonomy" id="316278"/>
    <lineage>
        <taxon>Bacteria</taxon>
        <taxon>Bacillati</taxon>
        <taxon>Cyanobacteriota</taxon>
        <taxon>Cyanophyceae</taxon>
        <taxon>Synechococcales</taxon>
        <taxon>Synechococcaceae</taxon>
        <taxon>Synechococcus</taxon>
    </lineage>
</organism>
<sequence>MAKRSLSALNSDALRGKRVLVRVDFNVPLNDAGAITDDTRIRAALPTIKDLTGKGAKVILSAHFGRPKGQVNEDMRLTPVAARLSELLGAPVAKTDSCIGSDAEAKVAAMADGDVVLLENVRFFAEEEKNESGFAEKLAALAEVYVNDAFGAAHRAHASTEGVTKYLSPSVAGYLMEKELQYLQGAVDDPKRPLAAIVGGSKVSSKIGVLEALIDKCDKVLIGGGMIFTFYKARGLSVGKSLVEEDKLELAKELEAKAKAKGVQLLLPTDVVLADNFAPDANSQVASIDAIPEGWMGLDIGPDSIKVFQDALGDCKTVIWNGPMGVFEFDKFAAGTNAIATTLAELSAKGCCTIIGGGDSVAAVEKAGLAAQMSHISTGGGASLELLEGKVLPGVAALDEAA</sequence>
<dbReference type="EC" id="2.7.2.3" evidence="1"/>
<dbReference type="EMBL" id="CT978603">
    <property type="protein sequence ID" value="CAK29132.1"/>
    <property type="molecule type" value="Genomic_DNA"/>
</dbReference>
<dbReference type="SMR" id="A5GW73"/>
<dbReference type="STRING" id="316278.SynRCC307_2229"/>
<dbReference type="KEGG" id="syr:SynRCC307_2229"/>
<dbReference type="eggNOG" id="COG0126">
    <property type="taxonomic scope" value="Bacteria"/>
</dbReference>
<dbReference type="HOGENOM" id="CLU_025427_0_2_3"/>
<dbReference type="OrthoDB" id="9808460at2"/>
<dbReference type="UniPathway" id="UPA00109">
    <property type="reaction ID" value="UER00185"/>
</dbReference>
<dbReference type="Proteomes" id="UP000001115">
    <property type="component" value="Chromosome"/>
</dbReference>
<dbReference type="GO" id="GO:0005829">
    <property type="term" value="C:cytosol"/>
    <property type="evidence" value="ECO:0007669"/>
    <property type="project" value="TreeGrafter"/>
</dbReference>
<dbReference type="GO" id="GO:0043531">
    <property type="term" value="F:ADP binding"/>
    <property type="evidence" value="ECO:0007669"/>
    <property type="project" value="TreeGrafter"/>
</dbReference>
<dbReference type="GO" id="GO:0005524">
    <property type="term" value="F:ATP binding"/>
    <property type="evidence" value="ECO:0007669"/>
    <property type="project" value="UniProtKB-KW"/>
</dbReference>
<dbReference type="GO" id="GO:0004618">
    <property type="term" value="F:phosphoglycerate kinase activity"/>
    <property type="evidence" value="ECO:0007669"/>
    <property type="project" value="UniProtKB-UniRule"/>
</dbReference>
<dbReference type="GO" id="GO:0006094">
    <property type="term" value="P:gluconeogenesis"/>
    <property type="evidence" value="ECO:0007669"/>
    <property type="project" value="TreeGrafter"/>
</dbReference>
<dbReference type="GO" id="GO:0006096">
    <property type="term" value="P:glycolytic process"/>
    <property type="evidence" value="ECO:0007669"/>
    <property type="project" value="UniProtKB-UniRule"/>
</dbReference>
<dbReference type="CDD" id="cd00318">
    <property type="entry name" value="Phosphoglycerate_kinase"/>
    <property type="match status" value="1"/>
</dbReference>
<dbReference type="FunFam" id="3.40.50.1260:FF:000003">
    <property type="entry name" value="Phosphoglycerate kinase"/>
    <property type="match status" value="1"/>
</dbReference>
<dbReference type="FunFam" id="3.40.50.1260:FF:000006">
    <property type="entry name" value="Phosphoglycerate kinase"/>
    <property type="match status" value="1"/>
</dbReference>
<dbReference type="FunFam" id="3.40.50.1260:FF:000017">
    <property type="entry name" value="Phosphoglycerate kinase"/>
    <property type="match status" value="1"/>
</dbReference>
<dbReference type="Gene3D" id="3.40.50.1260">
    <property type="entry name" value="Phosphoglycerate kinase, N-terminal domain"/>
    <property type="match status" value="2"/>
</dbReference>
<dbReference type="HAMAP" id="MF_00145">
    <property type="entry name" value="Phosphoglyc_kinase"/>
    <property type="match status" value="1"/>
</dbReference>
<dbReference type="InterPro" id="IPR001576">
    <property type="entry name" value="Phosphoglycerate_kinase"/>
</dbReference>
<dbReference type="InterPro" id="IPR015911">
    <property type="entry name" value="Phosphoglycerate_kinase_CS"/>
</dbReference>
<dbReference type="InterPro" id="IPR015824">
    <property type="entry name" value="Phosphoglycerate_kinase_N"/>
</dbReference>
<dbReference type="InterPro" id="IPR036043">
    <property type="entry name" value="Phosphoglycerate_kinase_sf"/>
</dbReference>
<dbReference type="PANTHER" id="PTHR11406">
    <property type="entry name" value="PHOSPHOGLYCERATE KINASE"/>
    <property type="match status" value="1"/>
</dbReference>
<dbReference type="PANTHER" id="PTHR11406:SF23">
    <property type="entry name" value="PHOSPHOGLYCERATE KINASE 1, CHLOROPLASTIC-RELATED"/>
    <property type="match status" value="1"/>
</dbReference>
<dbReference type="Pfam" id="PF00162">
    <property type="entry name" value="PGK"/>
    <property type="match status" value="1"/>
</dbReference>
<dbReference type="PIRSF" id="PIRSF000724">
    <property type="entry name" value="Pgk"/>
    <property type="match status" value="1"/>
</dbReference>
<dbReference type="PRINTS" id="PR00477">
    <property type="entry name" value="PHGLYCKINASE"/>
</dbReference>
<dbReference type="SUPFAM" id="SSF53748">
    <property type="entry name" value="Phosphoglycerate kinase"/>
    <property type="match status" value="1"/>
</dbReference>
<dbReference type="PROSITE" id="PS00111">
    <property type="entry name" value="PGLYCERATE_KINASE"/>
    <property type="match status" value="1"/>
</dbReference>